<keyword id="KW-0175">Coiled coil</keyword>
<keyword id="KW-0963">Cytoplasm</keyword>
<keyword id="KW-0206">Cytoskeleton</keyword>
<keyword id="KW-0243">Dynein</keyword>
<keyword id="KW-0493">Microtubule</keyword>
<keyword id="KW-1185">Reference proteome</keyword>
<dbReference type="EMBL" id="L48661">
    <property type="protein sequence ID" value="AAA80458.1"/>
    <property type="status" value="ALT_SEQ"/>
    <property type="molecule type" value="Genomic_DNA"/>
</dbReference>
<dbReference type="EMBL" id="AL669989">
    <property type="protein sequence ID" value="CAD21101.1"/>
    <property type="status" value="ALT_SEQ"/>
    <property type="molecule type" value="Genomic_DNA"/>
</dbReference>
<dbReference type="EMBL" id="CM002237">
    <property type="protein sequence ID" value="EAA26534.2"/>
    <property type="molecule type" value="Genomic_DNA"/>
</dbReference>
<dbReference type="PIR" id="T18364">
    <property type="entry name" value="T18364"/>
</dbReference>
<dbReference type="RefSeq" id="XP_955770.2">
    <property type="nucleotide sequence ID" value="XM_950677.3"/>
</dbReference>
<dbReference type="SMR" id="Q01397"/>
<dbReference type="STRING" id="367110.Q01397"/>
<dbReference type="PaxDb" id="5141-EFNCRP00000002615"/>
<dbReference type="EnsemblFungi" id="EAA26534">
    <property type="protein sequence ID" value="EAA26534"/>
    <property type="gene ID" value="NCU03483"/>
</dbReference>
<dbReference type="GeneID" id="3871917"/>
<dbReference type="KEGG" id="ncr:NCU03483"/>
<dbReference type="VEuPathDB" id="FungiDB:NCU03483"/>
<dbReference type="HOGENOM" id="CLU_002523_1_1_1"/>
<dbReference type="InParanoid" id="Q01397"/>
<dbReference type="OMA" id="LFEMEPV"/>
<dbReference type="OrthoDB" id="2130750at2759"/>
<dbReference type="Proteomes" id="UP000001805">
    <property type="component" value="Chromosome 6, Linkage Group II"/>
</dbReference>
<dbReference type="GO" id="GO:0051286">
    <property type="term" value="C:cell tip"/>
    <property type="evidence" value="ECO:0000318"/>
    <property type="project" value="GO_Central"/>
</dbReference>
<dbReference type="GO" id="GO:0005737">
    <property type="term" value="C:cytoplasm"/>
    <property type="evidence" value="ECO:0007669"/>
    <property type="project" value="UniProtKB-SubCell"/>
</dbReference>
<dbReference type="GO" id="GO:0030286">
    <property type="term" value="C:dynein complex"/>
    <property type="evidence" value="ECO:0007669"/>
    <property type="project" value="UniProtKB-KW"/>
</dbReference>
<dbReference type="GO" id="GO:0005874">
    <property type="term" value="C:microtubule"/>
    <property type="evidence" value="ECO:0007669"/>
    <property type="project" value="UniProtKB-KW"/>
</dbReference>
<dbReference type="GO" id="GO:0005875">
    <property type="term" value="C:microtubule associated complex"/>
    <property type="evidence" value="ECO:0000318"/>
    <property type="project" value="GO_Central"/>
</dbReference>
<dbReference type="GO" id="GO:0005819">
    <property type="term" value="C:spindle"/>
    <property type="evidence" value="ECO:0000318"/>
    <property type="project" value="GO_Central"/>
</dbReference>
<dbReference type="GO" id="GO:0005816">
    <property type="term" value="C:spindle pole body"/>
    <property type="evidence" value="ECO:0000318"/>
    <property type="project" value="GO_Central"/>
</dbReference>
<dbReference type="GO" id="GO:0000132">
    <property type="term" value="P:establishment of mitotic spindle orientation"/>
    <property type="evidence" value="ECO:0000318"/>
    <property type="project" value="GO_Central"/>
</dbReference>
<dbReference type="GO" id="GO:0000743">
    <property type="term" value="P:nuclear migration involved in conjugation with cellular fusion"/>
    <property type="evidence" value="ECO:0000318"/>
    <property type="project" value="GO_Central"/>
</dbReference>
<dbReference type="Gene3D" id="2.30.30.190">
    <property type="entry name" value="CAP Gly-rich-like domain"/>
    <property type="match status" value="1"/>
</dbReference>
<dbReference type="InterPro" id="IPR036859">
    <property type="entry name" value="CAP-Gly_dom_sf"/>
</dbReference>
<dbReference type="InterPro" id="IPR000938">
    <property type="entry name" value="CAP-Gly_domain"/>
</dbReference>
<dbReference type="InterPro" id="IPR022157">
    <property type="entry name" value="Dynactin"/>
</dbReference>
<dbReference type="PANTHER" id="PTHR18916">
    <property type="entry name" value="DYNACTIN 1-RELATED MICROTUBULE-BINDING"/>
    <property type="match status" value="1"/>
</dbReference>
<dbReference type="Pfam" id="PF01302">
    <property type="entry name" value="CAP_GLY"/>
    <property type="match status" value="1"/>
</dbReference>
<dbReference type="Pfam" id="PF12455">
    <property type="entry name" value="Dynactin"/>
    <property type="match status" value="1"/>
</dbReference>
<dbReference type="SMART" id="SM01052">
    <property type="entry name" value="CAP_GLY"/>
    <property type="match status" value="1"/>
</dbReference>
<dbReference type="SUPFAM" id="SSF58100">
    <property type="entry name" value="Bacterial hemolysins"/>
    <property type="match status" value="1"/>
</dbReference>
<dbReference type="SUPFAM" id="SSF74924">
    <property type="entry name" value="Cap-Gly domain"/>
    <property type="match status" value="1"/>
</dbReference>
<dbReference type="PROSITE" id="PS00845">
    <property type="entry name" value="CAP_GLY_1"/>
    <property type="match status" value="1"/>
</dbReference>
<dbReference type="PROSITE" id="PS50245">
    <property type="entry name" value="CAP_GLY_2"/>
    <property type="match status" value="1"/>
</dbReference>
<organism>
    <name type="scientific">Neurospora crassa (strain ATCC 24698 / 74-OR23-1A / CBS 708.71 / DSM 1257 / FGSC 987)</name>
    <dbReference type="NCBI Taxonomy" id="367110"/>
    <lineage>
        <taxon>Eukaryota</taxon>
        <taxon>Fungi</taxon>
        <taxon>Dikarya</taxon>
        <taxon>Ascomycota</taxon>
        <taxon>Pezizomycotina</taxon>
        <taxon>Sordariomycetes</taxon>
        <taxon>Sordariomycetidae</taxon>
        <taxon>Sordariales</taxon>
        <taxon>Sordariaceae</taxon>
        <taxon>Neurospora</taxon>
    </lineage>
</organism>
<evidence type="ECO:0000250" key="1"/>
<evidence type="ECO:0000255" key="2"/>
<evidence type="ECO:0000255" key="3">
    <source>
        <dbReference type="PROSITE-ProRule" id="PRU00045"/>
    </source>
</evidence>
<evidence type="ECO:0000256" key="4">
    <source>
        <dbReference type="SAM" id="MobiDB-lite"/>
    </source>
</evidence>
<evidence type="ECO:0000305" key="5"/>
<gene>
    <name type="primary">ro-3</name>
    <name type="ORF">B8L21.160</name>
    <name type="ORF">NCU03483</name>
</gene>
<name>DYNA_NEUCR</name>
<feature type="chain" id="PRO_0000083524" description="Dynactin, 150 kDa isoform">
    <location>
        <begin position="1"/>
        <end position="1367"/>
    </location>
</feature>
<feature type="domain" description="CAP-Gly" evidence="3">
    <location>
        <begin position="28"/>
        <end position="70"/>
    </location>
</feature>
<feature type="region of interest" description="Disordered" evidence="4">
    <location>
        <begin position="76"/>
        <end position="318"/>
    </location>
</feature>
<feature type="coiled-coil region" evidence="2">
    <location>
        <begin position="321"/>
        <end position="598"/>
    </location>
</feature>
<feature type="coiled-coil region" evidence="2">
    <location>
        <begin position="637"/>
        <end position="698"/>
    </location>
</feature>
<feature type="coiled-coil region" evidence="2">
    <location>
        <begin position="1039"/>
        <end position="1199"/>
    </location>
</feature>
<feature type="compositionally biased region" description="Low complexity" evidence="4">
    <location>
        <begin position="88"/>
        <end position="99"/>
    </location>
</feature>
<feature type="compositionally biased region" description="Low complexity" evidence="4">
    <location>
        <begin position="132"/>
        <end position="149"/>
    </location>
</feature>
<feature type="compositionally biased region" description="Polar residues" evidence="4">
    <location>
        <begin position="150"/>
        <end position="163"/>
    </location>
</feature>
<feature type="compositionally biased region" description="Low complexity" evidence="4">
    <location>
        <begin position="164"/>
        <end position="190"/>
    </location>
</feature>
<feature type="compositionally biased region" description="Low complexity" evidence="4">
    <location>
        <begin position="243"/>
        <end position="259"/>
    </location>
</feature>
<feature type="sequence conflict" description="In Ref. 1; AAA80458." evidence="5" ref="1">
    <original>E</original>
    <variation>Q</variation>
    <location>
        <position position="1172"/>
    </location>
</feature>
<protein>
    <recommendedName>
        <fullName>Dynactin, 150 kDa isoform</fullName>
    </recommendedName>
    <alternativeName>
        <fullName>150 kDa dynein-associated polypeptide</fullName>
        <shortName>DAP-150</shortName>
        <shortName>DP-150</shortName>
    </alternativeName>
    <alternativeName>
        <fullName>p150-glued</fullName>
    </alternativeName>
</protein>
<proteinExistence type="inferred from homology"/>
<reference key="1">
    <citation type="journal article" date="1996" name="Mol. Biol. Cell">
        <title>p150Glued, the largest subunit of the dynactin complex, is nonessential in Neurospora but required for nuclear distribution.</title>
        <authorList>
            <person name="Tinsley J.H."/>
            <person name="Minke P.F."/>
            <person name="Bruno K.S."/>
            <person name="Plamann M."/>
        </authorList>
    </citation>
    <scope>NUCLEOTIDE SEQUENCE [GENOMIC DNA]</scope>
</reference>
<reference key="2">
    <citation type="journal article" date="2003" name="Nucleic Acids Res.">
        <title>What's in the genome of a filamentous fungus? Analysis of the Neurospora genome sequence.</title>
        <authorList>
            <person name="Mannhaupt G."/>
            <person name="Montrone C."/>
            <person name="Haase D."/>
            <person name="Mewes H.-W."/>
            <person name="Aign V."/>
            <person name="Hoheisel J.D."/>
            <person name="Fartmann B."/>
            <person name="Nyakatura G."/>
            <person name="Kempken F."/>
            <person name="Maier J."/>
            <person name="Schulte U."/>
        </authorList>
    </citation>
    <scope>NUCLEOTIDE SEQUENCE [LARGE SCALE GENOMIC DNA]</scope>
    <source>
        <strain>ATCC 24698 / 74-OR23-1A / CBS 708.71 / DSM 1257 / FGSC 987</strain>
    </source>
</reference>
<reference key="3">
    <citation type="journal article" date="2003" name="Nature">
        <title>The genome sequence of the filamentous fungus Neurospora crassa.</title>
        <authorList>
            <person name="Galagan J.E."/>
            <person name="Calvo S.E."/>
            <person name="Borkovich K.A."/>
            <person name="Selker E.U."/>
            <person name="Read N.D."/>
            <person name="Jaffe D.B."/>
            <person name="FitzHugh W."/>
            <person name="Ma L.-J."/>
            <person name="Smirnov S."/>
            <person name="Purcell S."/>
            <person name="Rehman B."/>
            <person name="Elkins T."/>
            <person name="Engels R."/>
            <person name="Wang S."/>
            <person name="Nielsen C.B."/>
            <person name="Butler J."/>
            <person name="Endrizzi M."/>
            <person name="Qui D."/>
            <person name="Ianakiev P."/>
            <person name="Bell-Pedersen D."/>
            <person name="Nelson M.A."/>
            <person name="Werner-Washburne M."/>
            <person name="Selitrennikoff C.P."/>
            <person name="Kinsey J.A."/>
            <person name="Braun E.L."/>
            <person name="Zelter A."/>
            <person name="Schulte U."/>
            <person name="Kothe G.O."/>
            <person name="Jedd G."/>
            <person name="Mewes H.-W."/>
            <person name="Staben C."/>
            <person name="Marcotte E."/>
            <person name="Greenberg D."/>
            <person name="Roy A."/>
            <person name="Foley K."/>
            <person name="Naylor J."/>
            <person name="Stange-Thomann N."/>
            <person name="Barrett R."/>
            <person name="Gnerre S."/>
            <person name="Kamal M."/>
            <person name="Kamvysselis M."/>
            <person name="Mauceli E.W."/>
            <person name="Bielke C."/>
            <person name="Rudd S."/>
            <person name="Frishman D."/>
            <person name="Krystofova S."/>
            <person name="Rasmussen C."/>
            <person name="Metzenberg R.L."/>
            <person name="Perkins D.D."/>
            <person name="Kroken S."/>
            <person name="Cogoni C."/>
            <person name="Macino G."/>
            <person name="Catcheside D.E.A."/>
            <person name="Li W."/>
            <person name="Pratt R.J."/>
            <person name="Osmani S.A."/>
            <person name="DeSouza C.P.C."/>
            <person name="Glass N.L."/>
            <person name="Orbach M.J."/>
            <person name="Berglund J.A."/>
            <person name="Voelker R."/>
            <person name="Yarden O."/>
            <person name="Plamann M."/>
            <person name="Seiler S."/>
            <person name="Dunlap J.C."/>
            <person name="Radford A."/>
            <person name="Aramayo R."/>
            <person name="Natvig D.O."/>
            <person name="Alex L.A."/>
            <person name="Mannhaupt G."/>
            <person name="Ebbole D.J."/>
            <person name="Freitag M."/>
            <person name="Paulsen I."/>
            <person name="Sachs M.S."/>
            <person name="Lander E.S."/>
            <person name="Nusbaum C."/>
            <person name="Birren B.W."/>
        </authorList>
    </citation>
    <scope>NUCLEOTIDE SEQUENCE [LARGE SCALE GENOMIC DNA]</scope>
    <source>
        <strain>ATCC 24698 / 74-OR23-1A / CBS 708.71 / DSM 1257 / FGSC 987</strain>
    </source>
</reference>
<accession>Q01397</accession>
<accession>Q7RV43</accession>
<accession>Q8WZS2</accession>
<comment type="function">
    <text evidence="1">Required for the cytoplasmic dynein-driven retrograde movement of vesicles and organelles along microtubules. Dynein-dynactin interaction is a key component of the mechanism of axonal transport of vesicles and organelles (By similarity).</text>
</comment>
<comment type="subunit">
    <text>Large macromolecular complex of at least 10 components; p150(glued) binds directly to microtubules and to cytoplasmic dynein.</text>
</comment>
<comment type="subcellular location">
    <subcellularLocation>
        <location>Cytoplasm</location>
    </subcellularLocation>
    <subcellularLocation>
        <location>Cytoplasm</location>
        <location>Cytoskeleton</location>
    </subcellularLocation>
</comment>
<comment type="similarity">
    <text evidence="5">Belongs to the dynactin 150 kDa subunit family.</text>
</comment>
<comment type="sequence caution" evidence="5">
    <conflict type="erroneous gene model prediction">
        <sequence resource="EMBL-CDS" id="AAA80458"/>
    </conflict>
</comment>
<comment type="sequence caution" evidence="5">
    <conflict type="erroneous gene model prediction">
        <sequence resource="EMBL-CDS" id="CAD21101"/>
    </conflict>
</comment>
<sequence>MSELGVAVGQKIELADGSGRTAFVRYVGETAFAPGTWVGIELDEPSGKNDGSVQGERYFNCEMGYGMFVRPTTFNVIAQPPPPPPPSTFRRSVTTRPTSLNASTTRRPAPVDSGLAKRMSLNAPSPSPGPRPSRTSSTSITRSPTRSPTKQLATASSSGNPSRSGTPSTTTKPAGPTTRTRPSLSTSRHSMGPPPTPTTRTTRKPSVSSVGTRPSIGATRPVGGRASMSARSSTNRLSDPRESTGSVSSVGKSGFKRGSASPRSSDEELSASPVPASPVHQKTAALEKLTAPGAGNGGGGASPGATSPNLKATTITPRSSITNTATMNKEIEDLKAKLKVLEKKRMEDREKLNSLEKVKAERDKFERIIQTLQIKYQPQQQEIQDLKRQLKEAENRLYNVEELQAEHDTAMELATLDREMAEETAEVLKVELDALKQKNEELELEVEVLREENSEFTNGMSPEERASTGWLQMERNNERLREALIRLRDITQQQEEELKDQIKSMEEDLREFETIKEQHTTAKEKLAQTEAIVEDLREQLNNALGAEEIIESLTEQTMNQSEEIKELRAVIDDLESLKEINDELEINHVQNEKEMQEEIDLKDSIIAEQFRQANLQRESLEDMEYTLSRFRELVTSLQSDLEDMRASHAVTENESEQLNSRSRAMLDLNMKLQISASKAQVKTIDLELRRMEAQEAEQHLEIVKLFLPDTYQSDRDSVLALLRFKRLAFKANLLNGFIKERVNGQPHPGHEDDIFDGCDAIDKLTWVSAMCDRFVNAISHCSLEQFSRYEGALYELEPVERALNGWIDGLRRDDLKEKQCADELKRTIALMTHLGEVHISNDLESFADDVHMKALLMQSHLESAAISVNSLKAMVQRVIPSSGEDDELAQYFSKRAEAVVSQTRSAKVIAGKTVRALEDLKTRSLSLTPDTLEAFEQSETATRDLANMARQIGLDLHAFLHEEGRTEPYNYMEVQSCIQRSAQASSPTASSPESDLFNTYLSYLRNATSTISDLASLASDLAQTQEFDRTPAPWILRSAELKAAKTVAPDINDELRRLRDDIAEARRSIAVREEMLSTAQVKIETLESRMRDANAKAARIVDLEADLQAAKKEAAQLQEDMEKQDRELKALESDRDKWKKIASESRVVVADGSGVGVDNKASAERAVATAREMDALKKEIEALQAAVRYLREDSRRARLKEQGDYEWLAEPLVKKKPSVQEQRKQLVKKEGKAVLGELVKLVSSAKVFDLGSLPEKAEDRLKWRPAKTTPGWWVAKQMEDWEALKEWEGSVKGRVRELGGVPGSKKAEREEEAKRMVRRTAAAKLQIRLPGMEGKVGHGGGGGSGRRVQIVGSREWESLQGRLAVVV</sequence>